<protein>
    <recommendedName>
        <fullName>Choline transporter-like protein 1</fullName>
    </recommendedName>
</protein>
<organism>
    <name type="scientific">Caenorhabditis briggsae</name>
    <dbReference type="NCBI Taxonomy" id="6238"/>
    <lineage>
        <taxon>Eukaryota</taxon>
        <taxon>Metazoa</taxon>
        <taxon>Ecdysozoa</taxon>
        <taxon>Nematoda</taxon>
        <taxon>Chromadorea</taxon>
        <taxon>Rhabditida</taxon>
        <taxon>Rhabditina</taxon>
        <taxon>Rhabditomorpha</taxon>
        <taxon>Rhabditoidea</taxon>
        <taxon>Rhabditidae</taxon>
        <taxon>Peloderinae</taxon>
        <taxon>Caenorhabditis</taxon>
    </lineage>
</organism>
<gene>
    <name type="primary">chtl-1</name>
    <name type="ORF">CBG14673</name>
</gene>
<sequence length="788" mass="89635">MARKKRTMPAAEVYEKSDSFGQLPSAPPISPHRMDHIYPDSYGSPPPLHQAYHVQPARANYVPDQIARFNVIKPDRLAKRHNPQLYTKRGCTDVFCCFLFFVFLCGWVVVASLGIMWGDPQRLIYPTDSEFRRCGVDQGGYYNFRYLQFFQIFTNKDIFSKRPYLFYFDLTKCISYATALGGCQTTQICVEECPSQYFSYLQLRTASAAEIQNKMKNVVYCTDDVDKSTVTTFVALQSLVQRGKCVSYTVKSVPVLQRCFPEAIFNAVDNVNTVLNSSNSLDYLKRTFGDDALIPQDIQITGQSSEVMKSVVEDQPVTHKVIHDLSQTWWQTLILIFAAGMLSFIWTVIMRLLGSLLIWLSIFLVLGALGFGAGFSWIKWNNLKATGAIDDYSFHPAFDAYFEMPTTWFVVAIATSVLLVIFLLVILFIRQRISIACALISESSKAIGSMMSTLVFPLFPFLLHIGVFALWGSIAIWLASSGQEICRMKETNGQVYNTSTKCDCNAKLAGCTYVGIEKESDTIFWLQVYNLFAFFWLSCFVTALGDIALAGAFASYYWARDKRHDVPTFPVIRALNRAMRYNLGSIAFGSLIIAIVKIIRVMLEYIDHKLGKSENKAVKWFLMCLKCCFWCLEMFFKFLTKNAYIMIAIYGKNFFSSAKDSFLLITRNIVRTVVVHKVAGILLFLGKAMITLGMGILSFYYFSGRWVVEGVPKVDLYYYFVPIVIVVIGSYFMADLFFDVYEMAVDTTFICFLEDSEQNDGSLERPYFMSQKLLEILGTKNEIPLHTK</sequence>
<accession>A8XKF2</accession>
<comment type="subcellular location">
    <subcellularLocation>
        <location evidence="1">Membrane</location>
        <topology evidence="1">Multi-pass membrane protein</topology>
    </subcellularLocation>
</comment>
<comment type="similarity">
    <text evidence="3">Belongs to the CTL (choline transporter-like) family.</text>
</comment>
<proteinExistence type="inferred from homology"/>
<keyword id="KW-0325">Glycoprotein</keyword>
<keyword id="KW-0472">Membrane</keyword>
<keyword id="KW-1185">Reference proteome</keyword>
<keyword id="KW-0812">Transmembrane</keyword>
<keyword id="KW-1133">Transmembrane helix</keyword>
<evidence type="ECO:0000250" key="1"/>
<evidence type="ECO:0000255" key="2"/>
<evidence type="ECO:0000305" key="3"/>
<reference key="1">
    <citation type="journal article" date="2003" name="PLoS Biol.">
        <title>The genome sequence of Caenorhabditis briggsae: a platform for comparative genomics.</title>
        <authorList>
            <person name="Stein L.D."/>
            <person name="Bao Z."/>
            <person name="Blasiar D."/>
            <person name="Blumenthal T."/>
            <person name="Brent M.R."/>
            <person name="Chen N."/>
            <person name="Chinwalla A."/>
            <person name="Clarke L."/>
            <person name="Clee C."/>
            <person name="Coghlan A."/>
            <person name="Coulson A."/>
            <person name="D'Eustachio P."/>
            <person name="Fitch D.H.A."/>
            <person name="Fulton L.A."/>
            <person name="Fulton R.E."/>
            <person name="Griffiths-Jones S."/>
            <person name="Harris T.W."/>
            <person name="Hillier L.W."/>
            <person name="Kamath R."/>
            <person name="Kuwabara P.E."/>
            <person name="Mardis E.R."/>
            <person name="Marra M.A."/>
            <person name="Miner T.L."/>
            <person name="Minx P."/>
            <person name="Mullikin J.C."/>
            <person name="Plumb R.W."/>
            <person name="Rogers J."/>
            <person name="Schein J.E."/>
            <person name="Sohrmann M."/>
            <person name="Spieth J."/>
            <person name="Stajich J.E."/>
            <person name="Wei C."/>
            <person name="Willey D."/>
            <person name="Wilson R.K."/>
            <person name="Durbin R.M."/>
            <person name="Waterston R.H."/>
        </authorList>
    </citation>
    <scope>NUCLEOTIDE SEQUENCE [LARGE SCALE GENOMIC DNA]</scope>
    <source>
        <strain>AF16</strain>
    </source>
</reference>
<dbReference type="EMBL" id="HE600983">
    <property type="protein sequence ID" value="CAP33126.2"/>
    <property type="molecule type" value="Genomic_DNA"/>
</dbReference>
<dbReference type="SMR" id="A8XKF2"/>
<dbReference type="FunCoup" id="A8XKF2">
    <property type="interactions" value="1448"/>
</dbReference>
<dbReference type="STRING" id="6238.A8XKF2"/>
<dbReference type="GlyCosmos" id="A8XKF2">
    <property type="glycosylation" value="2 sites, No reported glycans"/>
</dbReference>
<dbReference type="WormBase" id="CBG14673a">
    <property type="protein sequence ID" value="CBP03601"/>
    <property type="gene ID" value="WBGene00035096"/>
    <property type="gene designation" value="Cbr-chtl-1"/>
</dbReference>
<dbReference type="eggNOG" id="KOG1362">
    <property type="taxonomic scope" value="Eukaryota"/>
</dbReference>
<dbReference type="HOGENOM" id="CLU_017181_3_1_1"/>
<dbReference type="InParanoid" id="A8XKF2"/>
<dbReference type="OMA" id="SQRKCRD"/>
<dbReference type="Proteomes" id="UP000008549">
    <property type="component" value="Unassembled WGS sequence"/>
</dbReference>
<dbReference type="GO" id="GO:0016020">
    <property type="term" value="C:membrane"/>
    <property type="evidence" value="ECO:0000318"/>
    <property type="project" value="GO_Central"/>
</dbReference>
<dbReference type="GO" id="GO:0022857">
    <property type="term" value="F:transmembrane transporter activity"/>
    <property type="evidence" value="ECO:0000318"/>
    <property type="project" value="GO_Central"/>
</dbReference>
<dbReference type="GO" id="GO:0055085">
    <property type="term" value="P:transmembrane transport"/>
    <property type="evidence" value="ECO:0000318"/>
    <property type="project" value="GO_Central"/>
</dbReference>
<dbReference type="InterPro" id="IPR007603">
    <property type="entry name" value="Choline_transptr-like"/>
</dbReference>
<dbReference type="PANTHER" id="PTHR12385">
    <property type="entry name" value="CHOLINE TRANSPORTER-LIKE (SLC FAMILY 44)"/>
    <property type="match status" value="1"/>
</dbReference>
<dbReference type="PANTHER" id="PTHR12385:SF14">
    <property type="entry name" value="CHOLINE TRANSPORTER-LIKE 2"/>
    <property type="match status" value="1"/>
</dbReference>
<dbReference type="Pfam" id="PF04515">
    <property type="entry name" value="Choline_transpo"/>
    <property type="match status" value="1"/>
</dbReference>
<feature type="chain" id="PRO_0000359728" description="Choline transporter-like protein 1">
    <location>
        <begin position="1"/>
        <end position="788"/>
    </location>
</feature>
<feature type="transmembrane region" description="Helical" evidence="2">
    <location>
        <begin position="98"/>
        <end position="118"/>
    </location>
</feature>
<feature type="transmembrane region" description="Helical" evidence="2">
    <location>
        <begin position="329"/>
        <end position="349"/>
    </location>
</feature>
<feature type="transmembrane region" description="Helical" evidence="2">
    <location>
        <begin position="352"/>
        <end position="372"/>
    </location>
</feature>
<feature type="transmembrane region" description="Helical" evidence="2">
    <location>
        <begin position="409"/>
        <end position="429"/>
    </location>
</feature>
<feature type="transmembrane region" description="Helical" evidence="2">
    <location>
        <begin position="458"/>
        <end position="478"/>
    </location>
</feature>
<feature type="transmembrane region" description="Helical" evidence="2">
    <location>
        <begin position="531"/>
        <end position="551"/>
    </location>
</feature>
<feature type="transmembrane region" description="Helical" evidence="2">
    <location>
        <begin position="583"/>
        <end position="603"/>
    </location>
</feature>
<feature type="transmembrane region" description="Helical" evidence="2">
    <location>
        <begin position="620"/>
        <end position="640"/>
    </location>
</feature>
<feature type="transmembrane region" description="Helical" evidence="2">
    <location>
        <begin position="679"/>
        <end position="699"/>
    </location>
</feature>
<feature type="transmembrane region" description="Helical" evidence="2">
    <location>
        <begin position="718"/>
        <end position="738"/>
    </location>
</feature>
<feature type="glycosylation site" description="N-linked (GlcNAc...) asparagine" evidence="2">
    <location>
        <position position="276"/>
    </location>
</feature>
<feature type="glycosylation site" description="N-linked (GlcNAc...) asparagine" evidence="2">
    <location>
        <position position="497"/>
    </location>
</feature>
<name>CTL1L_CAEBR</name>